<dbReference type="EMBL" id="CP000250">
    <property type="protein sequence ID" value="ABD07373.1"/>
    <property type="molecule type" value="Genomic_DNA"/>
</dbReference>
<dbReference type="RefSeq" id="WP_011441558.1">
    <property type="nucleotide sequence ID" value="NC_007778.1"/>
</dbReference>
<dbReference type="SMR" id="Q2IWN7"/>
<dbReference type="STRING" id="316058.RPB_2671"/>
<dbReference type="KEGG" id="rpb:RPB_2671"/>
<dbReference type="eggNOG" id="COG0102">
    <property type="taxonomic scope" value="Bacteria"/>
</dbReference>
<dbReference type="HOGENOM" id="CLU_082184_2_0_5"/>
<dbReference type="OrthoDB" id="9801330at2"/>
<dbReference type="Proteomes" id="UP000008809">
    <property type="component" value="Chromosome"/>
</dbReference>
<dbReference type="GO" id="GO:0022625">
    <property type="term" value="C:cytosolic large ribosomal subunit"/>
    <property type="evidence" value="ECO:0007669"/>
    <property type="project" value="TreeGrafter"/>
</dbReference>
<dbReference type="GO" id="GO:0003729">
    <property type="term" value="F:mRNA binding"/>
    <property type="evidence" value="ECO:0007669"/>
    <property type="project" value="TreeGrafter"/>
</dbReference>
<dbReference type="GO" id="GO:0003735">
    <property type="term" value="F:structural constituent of ribosome"/>
    <property type="evidence" value="ECO:0007669"/>
    <property type="project" value="InterPro"/>
</dbReference>
<dbReference type="GO" id="GO:0017148">
    <property type="term" value="P:negative regulation of translation"/>
    <property type="evidence" value="ECO:0007669"/>
    <property type="project" value="TreeGrafter"/>
</dbReference>
<dbReference type="GO" id="GO:0006412">
    <property type="term" value="P:translation"/>
    <property type="evidence" value="ECO:0007669"/>
    <property type="project" value="UniProtKB-UniRule"/>
</dbReference>
<dbReference type="CDD" id="cd00392">
    <property type="entry name" value="Ribosomal_L13"/>
    <property type="match status" value="1"/>
</dbReference>
<dbReference type="FunFam" id="3.90.1180.10:FF:000001">
    <property type="entry name" value="50S ribosomal protein L13"/>
    <property type="match status" value="1"/>
</dbReference>
<dbReference type="Gene3D" id="3.90.1180.10">
    <property type="entry name" value="Ribosomal protein L13"/>
    <property type="match status" value="1"/>
</dbReference>
<dbReference type="HAMAP" id="MF_01366">
    <property type="entry name" value="Ribosomal_uL13"/>
    <property type="match status" value="1"/>
</dbReference>
<dbReference type="InterPro" id="IPR005822">
    <property type="entry name" value="Ribosomal_uL13"/>
</dbReference>
<dbReference type="InterPro" id="IPR005823">
    <property type="entry name" value="Ribosomal_uL13_bac-type"/>
</dbReference>
<dbReference type="InterPro" id="IPR036899">
    <property type="entry name" value="Ribosomal_uL13_sf"/>
</dbReference>
<dbReference type="NCBIfam" id="TIGR01066">
    <property type="entry name" value="rplM_bact"/>
    <property type="match status" value="1"/>
</dbReference>
<dbReference type="PANTHER" id="PTHR11545:SF2">
    <property type="entry name" value="LARGE RIBOSOMAL SUBUNIT PROTEIN UL13M"/>
    <property type="match status" value="1"/>
</dbReference>
<dbReference type="PANTHER" id="PTHR11545">
    <property type="entry name" value="RIBOSOMAL PROTEIN L13"/>
    <property type="match status" value="1"/>
</dbReference>
<dbReference type="Pfam" id="PF00572">
    <property type="entry name" value="Ribosomal_L13"/>
    <property type="match status" value="1"/>
</dbReference>
<dbReference type="PIRSF" id="PIRSF002181">
    <property type="entry name" value="Ribosomal_L13"/>
    <property type="match status" value="1"/>
</dbReference>
<dbReference type="SUPFAM" id="SSF52161">
    <property type="entry name" value="Ribosomal protein L13"/>
    <property type="match status" value="1"/>
</dbReference>
<proteinExistence type="inferred from homology"/>
<sequence length="154" mass="17129">MKTFSAKPAEVTKKWVVIDATGLVVGRLATLVAMRLRGKHLPTYTPHVDCGDNIIIINAAKVVLTGRKRDNKVYYHHTGFIGGIKERTAKSILEGRFPERVVEKAVERMIPRGPLGRVQMGNLRVYPGAEHPHEAQQPETLDVGAMNRKNKRAA</sequence>
<evidence type="ECO:0000255" key="1">
    <source>
        <dbReference type="HAMAP-Rule" id="MF_01366"/>
    </source>
</evidence>
<evidence type="ECO:0000256" key="2">
    <source>
        <dbReference type="SAM" id="MobiDB-lite"/>
    </source>
</evidence>
<evidence type="ECO:0000305" key="3"/>
<feature type="chain" id="PRO_1000055453" description="Large ribosomal subunit protein uL13">
    <location>
        <begin position="1"/>
        <end position="154"/>
    </location>
</feature>
<feature type="region of interest" description="Disordered" evidence="2">
    <location>
        <begin position="132"/>
        <end position="154"/>
    </location>
</feature>
<organism>
    <name type="scientific">Rhodopseudomonas palustris (strain HaA2)</name>
    <dbReference type="NCBI Taxonomy" id="316058"/>
    <lineage>
        <taxon>Bacteria</taxon>
        <taxon>Pseudomonadati</taxon>
        <taxon>Pseudomonadota</taxon>
        <taxon>Alphaproteobacteria</taxon>
        <taxon>Hyphomicrobiales</taxon>
        <taxon>Nitrobacteraceae</taxon>
        <taxon>Rhodopseudomonas</taxon>
    </lineage>
</organism>
<gene>
    <name evidence="1" type="primary">rplM</name>
    <name type="ordered locus">RPB_2671</name>
</gene>
<accession>Q2IWN7</accession>
<reference key="1">
    <citation type="submission" date="2006-01" db="EMBL/GenBank/DDBJ databases">
        <title>Complete sequence of Rhodopseudomonas palustris HaA2.</title>
        <authorList>
            <consortium name="US DOE Joint Genome Institute"/>
            <person name="Copeland A."/>
            <person name="Lucas S."/>
            <person name="Lapidus A."/>
            <person name="Barry K."/>
            <person name="Detter J.C."/>
            <person name="Glavina T."/>
            <person name="Hammon N."/>
            <person name="Israni S."/>
            <person name="Pitluck S."/>
            <person name="Chain P."/>
            <person name="Malfatti S."/>
            <person name="Shin M."/>
            <person name="Vergez L."/>
            <person name="Schmutz J."/>
            <person name="Larimer F."/>
            <person name="Land M."/>
            <person name="Hauser L."/>
            <person name="Pelletier D.A."/>
            <person name="Kyrpides N."/>
            <person name="Anderson I."/>
            <person name="Oda Y."/>
            <person name="Harwood C.S."/>
            <person name="Richardson P."/>
        </authorList>
    </citation>
    <scope>NUCLEOTIDE SEQUENCE [LARGE SCALE GENOMIC DNA]</scope>
    <source>
        <strain>HaA2</strain>
    </source>
</reference>
<keyword id="KW-1185">Reference proteome</keyword>
<keyword id="KW-0687">Ribonucleoprotein</keyword>
<keyword id="KW-0689">Ribosomal protein</keyword>
<comment type="function">
    <text evidence="1">This protein is one of the early assembly proteins of the 50S ribosomal subunit, although it is not seen to bind rRNA by itself. It is important during the early stages of 50S assembly.</text>
</comment>
<comment type="subunit">
    <text evidence="1">Part of the 50S ribosomal subunit.</text>
</comment>
<comment type="similarity">
    <text evidence="1">Belongs to the universal ribosomal protein uL13 family.</text>
</comment>
<name>RL13_RHOP2</name>
<protein>
    <recommendedName>
        <fullName evidence="1">Large ribosomal subunit protein uL13</fullName>
    </recommendedName>
    <alternativeName>
        <fullName evidence="3">50S ribosomal protein L13</fullName>
    </alternativeName>
</protein>